<organism>
    <name type="scientific">Chaetomium globosum (strain ATCC 6205 / CBS 148.51 / DSM 1962 / NBRC 6347 / NRRL 1970)</name>
    <name type="common">Soil fungus</name>
    <dbReference type="NCBI Taxonomy" id="306901"/>
    <lineage>
        <taxon>Eukaryota</taxon>
        <taxon>Fungi</taxon>
        <taxon>Dikarya</taxon>
        <taxon>Ascomycota</taxon>
        <taxon>Pezizomycotina</taxon>
        <taxon>Sordariomycetes</taxon>
        <taxon>Sordariomycetidae</taxon>
        <taxon>Sordariales</taxon>
        <taxon>Chaetomiaceae</taxon>
        <taxon>Chaetomium</taxon>
    </lineage>
</organism>
<protein>
    <recommendedName>
        <fullName>Plasma membrane proteolipid 3</fullName>
    </recommendedName>
</protein>
<keyword id="KW-1003">Cell membrane</keyword>
<keyword id="KW-0472">Membrane</keyword>
<keyword id="KW-1185">Reference proteome</keyword>
<keyword id="KW-0812">Transmembrane</keyword>
<keyword id="KW-1133">Transmembrane helix</keyword>
<sequence length="53" mass="5587">MPFTASDICKIIFAVILPPLGVFLERGCNSDLLINILLTILGVGSILASMNPA</sequence>
<feature type="chain" id="PRO_0000247909" description="Plasma membrane proteolipid 3">
    <location>
        <begin position="1"/>
        <end position="53"/>
    </location>
</feature>
<feature type="transmembrane region" description="Helical" evidence="2">
    <location>
        <begin position="32"/>
        <end position="52"/>
    </location>
</feature>
<comment type="function">
    <text evidence="1">Plays a role in the regulation of membrane potential. Could mediate a proton leak (By similarity).</text>
</comment>
<comment type="subcellular location">
    <subcellularLocation>
        <location evidence="3">Cell membrane</location>
        <topology evidence="3">Single-pass membrane protein</topology>
    </subcellularLocation>
</comment>
<comment type="similarity">
    <text evidence="3">Belongs to the UPF0057 (PMP3) family.</text>
</comment>
<reference key="1">
    <citation type="journal article" date="2015" name="Genome Announc.">
        <title>Draft genome sequence of the cellulolytic fungus Chaetomium globosum.</title>
        <authorList>
            <person name="Cuomo C.A."/>
            <person name="Untereiner W.A."/>
            <person name="Ma L.-J."/>
            <person name="Grabherr M."/>
            <person name="Birren B.W."/>
        </authorList>
    </citation>
    <scope>NUCLEOTIDE SEQUENCE [LARGE SCALE GENOMIC DNA]</scope>
    <source>
        <strain>ATCC 6205 / CBS 148.51 / DSM 1962 / NBRC 6347 / NRRL 1970</strain>
    </source>
</reference>
<evidence type="ECO:0000250" key="1"/>
<evidence type="ECO:0000255" key="2"/>
<evidence type="ECO:0000305" key="3"/>
<proteinExistence type="inferred from homology"/>
<gene>
    <name type="primary">PMP3</name>
    <name type="ORF">CHGG_02694</name>
</gene>
<accession>Q2HAR0</accession>
<name>PMP3_CHAGB</name>
<dbReference type="EMBL" id="CH408030">
    <property type="protein sequence ID" value="EAQ90759.1"/>
    <property type="molecule type" value="Genomic_DNA"/>
</dbReference>
<dbReference type="RefSeq" id="XP_001229210.1">
    <property type="nucleotide sequence ID" value="XM_001229209.1"/>
</dbReference>
<dbReference type="STRING" id="306901.Q2HAR0"/>
<dbReference type="GeneID" id="4389369"/>
<dbReference type="VEuPathDB" id="FungiDB:CHGG_02694"/>
<dbReference type="eggNOG" id="KOG1773">
    <property type="taxonomic scope" value="Eukaryota"/>
</dbReference>
<dbReference type="HOGENOM" id="CLU_107649_8_0_1"/>
<dbReference type="InParanoid" id="Q2HAR0"/>
<dbReference type="OMA" id="STATFCE"/>
<dbReference type="OrthoDB" id="2802411at2759"/>
<dbReference type="Proteomes" id="UP000001056">
    <property type="component" value="Unassembled WGS sequence"/>
</dbReference>
<dbReference type="GO" id="GO:0005886">
    <property type="term" value="C:plasma membrane"/>
    <property type="evidence" value="ECO:0007669"/>
    <property type="project" value="UniProtKB-SubCell"/>
</dbReference>
<dbReference type="InterPro" id="IPR000612">
    <property type="entry name" value="PMP3"/>
</dbReference>
<dbReference type="PANTHER" id="PTHR21659">
    <property type="entry name" value="HYDROPHOBIC PROTEIN RCI2 LOW TEMPERATURE AND SALT RESPONSIVE PROTEIN LTI6 -RELATED"/>
    <property type="match status" value="1"/>
</dbReference>
<dbReference type="PANTHER" id="PTHR21659:SF116">
    <property type="entry name" value="PLASMA MEMBRANE PROTEOLIPID 3"/>
    <property type="match status" value="1"/>
</dbReference>
<dbReference type="Pfam" id="PF01679">
    <property type="entry name" value="Pmp3"/>
    <property type="match status" value="1"/>
</dbReference>
<dbReference type="PROSITE" id="PS01309">
    <property type="entry name" value="UPF0057"/>
    <property type="match status" value="1"/>
</dbReference>